<sequence length="138" mass="15156">MIIGIGSDLSDIRRIQASLDRFGDRFRHRVFTEIERTRSDRKADAAASYAKRFAAKEACAKALGTGMRRGVFWRDMGVVNMRSGQPTMALTGGALRRLEEITPPGMTAHIHLSLTDDHPYAQAFVIIEALPAAPSAAE</sequence>
<keyword id="KW-0963">Cytoplasm</keyword>
<keyword id="KW-0275">Fatty acid biosynthesis</keyword>
<keyword id="KW-0276">Fatty acid metabolism</keyword>
<keyword id="KW-0444">Lipid biosynthesis</keyword>
<keyword id="KW-0443">Lipid metabolism</keyword>
<keyword id="KW-0460">Magnesium</keyword>
<keyword id="KW-0479">Metal-binding</keyword>
<keyword id="KW-1185">Reference proteome</keyword>
<keyword id="KW-0808">Transferase</keyword>
<dbReference type="EC" id="2.7.8.7" evidence="1"/>
<dbReference type="EMBL" id="CP000747">
    <property type="protein sequence ID" value="ACG78286.1"/>
    <property type="molecule type" value="Genomic_DNA"/>
</dbReference>
<dbReference type="RefSeq" id="WP_012522428.1">
    <property type="nucleotide sequence ID" value="NC_011144.1"/>
</dbReference>
<dbReference type="SMR" id="B4RCU9"/>
<dbReference type="STRING" id="450851.PHZ_c1875"/>
<dbReference type="KEGG" id="pzu:PHZ_c1875"/>
<dbReference type="eggNOG" id="COG0736">
    <property type="taxonomic scope" value="Bacteria"/>
</dbReference>
<dbReference type="HOGENOM" id="CLU_089696_0_2_5"/>
<dbReference type="OrthoDB" id="517356at2"/>
<dbReference type="Proteomes" id="UP000001868">
    <property type="component" value="Chromosome"/>
</dbReference>
<dbReference type="GO" id="GO:0005737">
    <property type="term" value="C:cytoplasm"/>
    <property type="evidence" value="ECO:0007669"/>
    <property type="project" value="UniProtKB-SubCell"/>
</dbReference>
<dbReference type="GO" id="GO:0008897">
    <property type="term" value="F:holo-[acyl-carrier-protein] synthase activity"/>
    <property type="evidence" value="ECO:0007669"/>
    <property type="project" value="UniProtKB-UniRule"/>
</dbReference>
<dbReference type="GO" id="GO:0000287">
    <property type="term" value="F:magnesium ion binding"/>
    <property type="evidence" value="ECO:0007669"/>
    <property type="project" value="UniProtKB-UniRule"/>
</dbReference>
<dbReference type="GO" id="GO:0006633">
    <property type="term" value="P:fatty acid biosynthetic process"/>
    <property type="evidence" value="ECO:0007669"/>
    <property type="project" value="UniProtKB-UniRule"/>
</dbReference>
<dbReference type="Gene3D" id="3.90.470.20">
    <property type="entry name" value="4'-phosphopantetheinyl transferase domain"/>
    <property type="match status" value="1"/>
</dbReference>
<dbReference type="HAMAP" id="MF_00101">
    <property type="entry name" value="AcpS"/>
    <property type="match status" value="1"/>
</dbReference>
<dbReference type="InterPro" id="IPR008278">
    <property type="entry name" value="4-PPantetheinyl_Trfase_dom"/>
</dbReference>
<dbReference type="InterPro" id="IPR037143">
    <property type="entry name" value="4-PPantetheinyl_Trfase_dom_sf"/>
</dbReference>
<dbReference type="InterPro" id="IPR002582">
    <property type="entry name" value="ACPS"/>
</dbReference>
<dbReference type="InterPro" id="IPR004568">
    <property type="entry name" value="Ppantetheine-prot_Trfase_dom"/>
</dbReference>
<dbReference type="NCBIfam" id="TIGR00516">
    <property type="entry name" value="acpS"/>
    <property type="match status" value="1"/>
</dbReference>
<dbReference type="NCBIfam" id="TIGR00556">
    <property type="entry name" value="pantethn_trn"/>
    <property type="match status" value="1"/>
</dbReference>
<dbReference type="Pfam" id="PF01648">
    <property type="entry name" value="ACPS"/>
    <property type="match status" value="1"/>
</dbReference>
<dbReference type="SUPFAM" id="SSF56214">
    <property type="entry name" value="4'-phosphopantetheinyl transferase"/>
    <property type="match status" value="1"/>
</dbReference>
<protein>
    <recommendedName>
        <fullName evidence="1">Holo-[acyl-carrier-protein] synthase</fullName>
        <shortName evidence="1">Holo-ACP synthase</shortName>
        <ecNumber evidence="1">2.7.8.7</ecNumber>
    </recommendedName>
    <alternativeName>
        <fullName evidence="1">4'-phosphopantetheinyl transferase AcpS</fullName>
    </alternativeName>
</protein>
<reference key="1">
    <citation type="journal article" date="2008" name="BMC Genomics">
        <title>Complete genome of Phenylobacterium zucineum - a novel facultative intracellular bacterium isolated from human erythroleukemia cell line K562.</title>
        <authorList>
            <person name="Luo Y."/>
            <person name="Xu X."/>
            <person name="Ding Z."/>
            <person name="Liu Z."/>
            <person name="Zhang B."/>
            <person name="Yan Z."/>
            <person name="Sun J."/>
            <person name="Hu S."/>
            <person name="Hu X."/>
        </authorList>
    </citation>
    <scope>NUCLEOTIDE SEQUENCE [LARGE SCALE GENOMIC DNA]</scope>
    <source>
        <strain>HLK1</strain>
    </source>
</reference>
<proteinExistence type="inferred from homology"/>
<gene>
    <name evidence="1" type="primary">acpS</name>
    <name type="ordered locus">PHZ_c1875</name>
</gene>
<organism>
    <name type="scientific">Phenylobacterium zucineum (strain HLK1)</name>
    <dbReference type="NCBI Taxonomy" id="450851"/>
    <lineage>
        <taxon>Bacteria</taxon>
        <taxon>Pseudomonadati</taxon>
        <taxon>Pseudomonadota</taxon>
        <taxon>Alphaproteobacteria</taxon>
        <taxon>Caulobacterales</taxon>
        <taxon>Caulobacteraceae</taxon>
        <taxon>Phenylobacterium</taxon>
    </lineage>
</organism>
<accession>B4RCU9</accession>
<comment type="function">
    <text evidence="1">Transfers the 4'-phosphopantetheine moiety from coenzyme A to a Ser of acyl-carrier-protein.</text>
</comment>
<comment type="catalytic activity">
    <reaction evidence="1">
        <text>apo-[ACP] + CoA = holo-[ACP] + adenosine 3',5'-bisphosphate + H(+)</text>
        <dbReference type="Rhea" id="RHEA:12068"/>
        <dbReference type="Rhea" id="RHEA-COMP:9685"/>
        <dbReference type="Rhea" id="RHEA-COMP:9690"/>
        <dbReference type="ChEBI" id="CHEBI:15378"/>
        <dbReference type="ChEBI" id="CHEBI:29999"/>
        <dbReference type="ChEBI" id="CHEBI:57287"/>
        <dbReference type="ChEBI" id="CHEBI:58343"/>
        <dbReference type="ChEBI" id="CHEBI:64479"/>
        <dbReference type="EC" id="2.7.8.7"/>
    </reaction>
</comment>
<comment type="cofactor">
    <cofactor evidence="1">
        <name>Mg(2+)</name>
        <dbReference type="ChEBI" id="CHEBI:18420"/>
    </cofactor>
</comment>
<comment type="subcellular location">
    <subcellularLocation>
        <location evidence="1">Cytoplasm</location>
    </subcellularLocation>
</comment>
<comment type="similarity">
    <text evidence="1">Belongs to the P-Pant transferase superfamily. AcpS family.</text>
</comment>
<name>ACPS_PHEZH</name>
<evidence type="ECO:0000255" key="1">
    <source>
        <dbReference type="HAMAP-Rule" id="MF_00101"/>
    </source>
</evidence>
<feature type="chain" id="PRO_1000093903" description="Holo-[acyl-carrier-protein] synthase">
    <location>
        <begin position="1"/>
        <end position="138"/>
    </location>
</feature>
<feature type="binding site" evidence="1">
    <location>
        <position position="8"/>
    </location>
    <ligand>
        <name>Mg(2+)</name>
        <dbReference type="ChEBI" id="CHEBI:18420"/>
    </ligand>
</feature>
<feature type="binding site" evidence="1">
    <location>
        <position position="57"/>
    </location>
    <ligand>
        <name>Mg(2+)</name>
        <dbReference type="ChEBI" id="CHEBI:18420"/>
    </ligand>
</feature>